<organism>
    <name type="scientific">Pseudomonas entomophila (strain L48)</name>
    <dbReference type="NCBI Taxonomy" id="384676"/>
    <lineage>
        <taxon>Bacteria</taxon>
        <taxon>Pseudomonadati</taxon>
        <taxon>Pseudomonadota</taxon>
        <taxon>Gammaproteobacteria</taxon>
        <taxon>Pseudomonadales</taxon>
        <taxon>Pseudomonadaceae</taxon>
        <taxon>Pseudomonas</taxon>
    </lineage>
</organism>
<protein>
    <recommendedName>
        <fullName evidence="1">tRNA dimethylallyltransferase</fullName>
        <ecNumber evidence="1">2.5.1.75</ecNumber>
    </recommendedName>
    <alternativeName>
        <fullName evidence="1">Dimethylallyl diphosphate:tRNA dimethylallyltransferase</fullName>
        <shortName evidence="1">DMAPP:tRNA dimethylallyltransferase</shortName>
        <shortName evidence="1">DMATase</shortName>
    </alternativeName>
    <alternativeName>
        <fullName evidence="1">Isopentenyl-diphosphate:tRNA isopentenyltransferase</fullName>
        <shortName evidence="1">IPP transferase</shortName>
        <shortName evidence="1">IPPT</shortName>
        <shortName evidence="1">IPTase</shortName>
    </alternativeName>
</protein>
<dbReference type="EC" id="2.5.1.75" evidence="1"/>
<dbReference type="EMBL" id="CT573326">
    <property type="protein sequence ID" value="CAK17588.1"/>
    <property type="molecule type" value="Genomic_DNA"/>
</dbReference>
<dbReference type="RefSeq" id="WP_011535949.1">
    <property type="nucleotide sequence ID" value="NC_008027.1"/>
</dbReference>
<dbReference type="SMR" id="Q1I448"/>
<dbReference type="STRING" id="384676.PSEEN4944"/>
<dbReference type="GeneID" id="32807892"/>
<dbReference type="KEGG" id="pen:PSEEN4944"/>
<dbReference type="eggNOG" id="COG0324">
    <property type="taxonomic scope" value="Bacteria"/>
</dbReference>
<dbReference type="HOGENOM" id="CLU_032616_0_0_6"/>
<dbReference type="OrthoDB" id="9776390at2"/>
<dbReference type="Proteomes" id="UP000000658">
    <property type="component" value="Chromosome"/>
</dbReference>
<dbReference type="GO" id="GO:0005524">
    <property type="term" value="F:ATP binding"/>
    <property type="evidence" value="ECO:0007669"/>
    <property type="project" value="UniProtKB-UniRule"/>
</dbReference>
<dbReference type="GO" id="GO:0052381">
    <property type="term" value="F:tRNA dimethylallyltransferase activity"/>
    <property type="evidence" value="ECO:0007669"/>
    <property type="project" value="UniProtKB-UniRule"/>
</dbReference>
<dbReference type="GO" id="GO:0006400">
    <property type="term" value="P:tRNA modification"/>
    <property type="evidence" value="ECO:0007669"/>
    <property type="project" value="TreeGrafter"/>
</dbReference>
<dbReference type="FunFam" id="1.10.20.140:FF:000001">
    <property type="entry name" value="tRNA dimethylallyltransferase"/>
    <property type="match status" value="1"/>
</dbReference>
<dbReference type="Gene3D" id="1.10.20.140">
    <property type="match status" value="1"/>
</dbReference>
<dbReference type="Gene3D" id="3.40.50.300">
    <property type="entry name" value="P-loop containing nucleotide triphosphate hydrolases"/>
    <property type="match status" value="1"/>
</dbReference>
<dbReference type="HAMAP" id="MF_00185">
    <property type="entry name" value="IPP_trans"/>
    <property type="match status" value="1"/>
</dbReference>
<dbReference type="InterPro" id="IPR039657">
    <property type="entry name" value="Dimethylallyltransferase"/>
</dbReference>
<dbReference type="InterPro" id="IPR018022">
    <property type="entry name" value="IPT"/>
</dbReference>
<dbReference type="InterPro" id="IPR027417">
    <property type="entry name" value="P-loop_NTPase"/>
</dbReference>
<dbReference type="NCBIfam" id="TIGR00174">
    <property type="entry name" value="miaA"/>
    <property type="match status" value="1"/>
</dbReference>
<dbReference type="PANTHER" id="PTHR11088">
    <property type="entry name" value="TRNA DIMETHYLALLYLTRANSFERASE"/>
    <property type="match status" value="1"/>
</dbReference>
<dbReference type="PANTHER" id="PTHR11088:SF60">
    <property type="entry name" value="TRNA DIMETHYLALLYLTRANSFERASE"/>
    <property type="match status" value="1"/>
</dbReference>
<dbReference type="Pfam" id="PF01715">
    <property type="entry name" value="IPPT"/>
    <property type="match status" value="1"/>
</dbReference>
<dbReference type="SUPFAM" id="SSF52540">
    <property type="entry name" value="P-loop containing nucleoside triphosphate hydrolases"/>
    <property type="match status" value="1"/>
</dbReference>
<gene>
    <name evidence="1" type="primary">miaA</name>
    <name type="ordered locus">PSEEN4944</name>
</gene>
<keyword id="KW-0067">ATP-binding</keyword>
<keyword id="KW-0460">Magnesium</keyword>
<keyword id="KW-0547">Nucleotide-binding</keyword>
<keyword id="KW-0808">Transferase</keyword>
<keyword id="KW-0819">tRNA processing</keyword>
<feature type="chain" id="PRO_1000020642" description="tRNA dimethylallyltransferase">
    <location>
        <begin position="1"/>
        <end position="323"/>
    </location>
</feature>
<feature type="region of interest" description="Interaction with substrate tRNA" evidence="1">
    <location>
        <begin position="37"/>
        <end position="40"/>
    </location>
</feature>
<feature type="region of interest" description="Interaction with substrate tRNA" evidence="1">
    <location>
        <begin position="161"/>
        <end position="165"/>
    </location>
</feature>
<feature type="binding site" evidence="1">
    <location>
        <begin position="12"/>
        <end position="19"/>
    </location>
    <ligand>
        <name>ATP</name>
        <dbReference type="ChEBI" id="CHEBI:30616"/>
    </ligand>
</feature>
<feature type="binding site" evidence="1">
    <location>
        <begin position="14"/>
        <end position="19"/>
    </location>
    <ligand>
        <name>substrate</name>
    </ligand>
</feature>
<feature type="site" description="Interaction with substrate tRNA" evidence="1">
    <location>
        <position position="103"/>
    </location>
</feature>
<feature type="site" description="Interaction with substrate tRNA" evidence="1">
    <location>
        <position position="125"/>
    </location>
</feature>
<evidence type="ECO:0000255" key="1">
    <source>
        <dbReference type="HAMAP-Rule" id="MF_00185"/>
    </source>
</evidence>
<comment type="function">
    <text evidence="1">Catalyzes the transfer of a dimethylallyl group onto the adenine at position 37 in tRNAs that read codons beginning with uridine, leading to the formation of N6-(dimethylallyl)adenosine (i(6)A).</text>
</comment>
<comment type="catalytic activity">
    <reaction evidence="1">
        <text>adenosine(37) in tRNA + dimethylallyl diphosphate = N(6)-dimethylallyladenosine(37) in tRNA + diphosphate</text>
        <dbReference type="Rhea" id="RHEA:26482"/>
        <dbReference type="Rhea" id="RHEA-COMP:10162"/>
        <dbReference type="Rhea" id="RHEA-COMP:10375"/>
        <dbReference type="ChEBI" id="CHEBI:33019"/>
        <dbReference type="ChEBI" id="CHEBI:57623"/>
        <dbReference type="ChEBI" id="CHEBI:74411"/>
        <dbReference type="ChEBI" id="CHEBI:74415"/>
        <dbReference type="EC" id="2.5.1.75"/>
    </reaction>
</comment>
<comment type="cofactor">
    <cofactor evidence="1">
        <name>Mg(2+)</name>
        <dbReference type="ChEBI" id="CHEBI:18420"/>
    </cofactor>
</comment>
<comment type="subunit">
    <text evidence="1">Monomer.</text>
</comment>
<comment type="similarity">
    <text evidence="1">Belongs to the IPP transferase family.</text>
</comment>
<sequence length="323" mass="35434">MSGKPPAIFLMGPTAAGKTDLAIELTKVLPCELISVDSALVYRGMDIGTAKPSKEILAAHPHRLIDILDPVESYSAKQFCTDALDAMAEITARGKIPLLVGGTMLYYKALVEGLADMPPADAAVRAELEAQASALGLGELHRQLAEVDPESAARIHPNDPQRLIRALEVYRVSGESMTAHRQRQFAESRGADAGANGHLPYTVASLAIAPTDRHILHQRIALRFSQMLEQGFVDEVRSLRARSDLHAGLPSIRAVGYRQVWDYLDGHLTENEMQERGIIATRQLAKRQFTWLRGWDGVHWLDSLACDNLSRTLKYLGAVSILS</sequence>
<accession>Q1I448</accession>
<name>MIAA_PSEE4</name>
<reference key="1">
    <citation type="journal article" date="2006" name="Nat. Biotechnol.">
        <title>Complete genome sequence of the entomopathogenic and metabolically versatile soil bacterium Pseudomonas entomophila.</title>
        <authorList>
            <person name="Vodovar N."/>
            <person name="Vallenet D."/>
            <person name="Cruveiller S."/>
            <person name="Rouy Z."/>
            <person name="Barbe V."/>
            <person name="Acosta C."/>
            <person name="Cattolico L."/>
            <person name="Jubin C."/>
            <person name="Lajus A."/>
            <person name="Segurens B."/>
            <person name="Vacherie B."/>
            <person name="Wincker P."/>
            <person name="Weissenbach J."/>
            <person name="Lemaitre B."/>
            <person name="Medigue C."/>
            <person name="Boccard F."/>
        </authorList>
    </citation>
    <scope>NUCLEOTIDE SEQUENCE [LARGE SCALE GENOMIC DNA]</scope>
    <source>
        <strain>L48</strain>
    </source>
</reference>
<proteinExistence type="inferred from homology"/>